<evidence type="ECO:0000250" key="1">
    <source>
        <dbReference type="UniProtKB" id="A0A0A1HA03"/>
    </source>
</evidence>
<evidence type="ECO:0000250" key="2">
    <source>
        <dbReference type="UniProtKB" id="K7NBW3"/>
    </source>
</evidence>
<evidence type="ECO:0000269" key="3">
    <source>
    </source>
</evidence>
<evidence type="ECO:0000269" key="4">
    <source>
    </source>
</evidence>
<evidence type="ECO:0000303" key="5">
    <source>
    </source>
</evidence>
<evidence type="ECO:0000303" key="6">
    <source>
    </source>
</evidence>
<evidence type="ECO:0000305" key="7"/>
<evidence type="ECO:0000305" key="8">
    <source>
    </source>
</evidence>
<keyword id="KW-0808">Transferase</keyword>
<organism>
    <name type="scientific">Siraitia grosvenorii</name>
    <name type="common">Monk's fruit</name>
    <name type="synonym">Luo han guo</name>
    <dbReference type="NCBI Taxonomy" id="190515"/>
    <lineage>
        <taxon>Eukaryota</taxon>
        <taxon>Viridiplantae</taxon>
        <taxon>Streptophyta</taxon>
        <taxon>Embryophyta</taxon>
        <taxon>Tracheophyta</taxon>
        <taxon>Spermatophyta</taxon>
        <taxon>Magnoliopsida</taxon>
        <taxon>eudicotyledons</taxon>
        <taxon>Gunneridae</taxon>
        <taxon>Pentapetalae</taxon>
        <taxon>rosids</taxon>
        <taxon>fabids</taxon>
        <taxon>Cucurbitales</taxon>
        <taxon>Cucurbitaceae</taxon>
        <taxon>Siraitieae</taxon>
        <taxon>Siraitia</taxon>
    </lineage>
</organism>
<proteinExistence type="evidence at protein level"/>
<protein>
    <recommendedName>
        <fullName evidence="7">Mogroside I-A1 synthase</fullName>
        <ecNumber evidence="3">2.4.1.-</ecNumber>
    </recommendedName>
    <alternativeName>
        <fullName evidence="7">Isomogroside IV synthase</fullName>
        <ecNumber evidence="3">2.4.1.-</ecNumber>
    </alternativeName>
    <alternativeName>
        <fullName evidence="7">Isomogroside V synthase</fullName>
        <ecNumber evidence="3">2.4.1.-</ecNumber>
    </alternativeName>
    <alternativeName>
        <fullName evidence="7">Mogroside II-E synthase</fullName>
        <ecNumber evidence="3">2.4.1.-</ecNumber>
    </alternativeName>
    <alternativeName>
        <fullName evidence="7">Mogroside III synthase</fullName>
        <ecNumber evidence="3">2.4.1.-</ecNumber>
    </alternativeName>
    <alternativeName>
        <fullName evidence="7">Mogroside III-C3(1-6) synthase</fullName>
        <ecNumber evidence="3">2.4.1.-</ecNumber>
    </alternativeName>
    <alternativeName>
        <fullName evidence="7">Mogroside IIIx synthase</fullName>
        <ecNumber evidence="3">2.4.1.-</ecNumber>
    </alternativeName>
    <alternativeName>
        <fullName evidence="7">Mogroside IV synthase</fullName>
        <ecNumber evidence="3">2.4.1.-</ecNumber>
    </alternativeName>
    <alternativeName>
        <fullName evidence="7">Mogroside IV-A synthase</fullName>
        <ecNumber evidence="3">2.4.1.-</ecNumber>
    </alternativeName>
    <alternativeName>
        <fullName evidence="5">UDP-glycosyltransferase 720-269-1</fullName>
        <shortName evidence="6">SgUGT269-1</shortName>
        <shortName evidence="5">UGT720-269-1</shortName>
    </alternativeName>
</protein>
<dbReference type="EC" id="2.4.1.-" evidence="3"/>
<dbReference type="SMR" id="P0DO66"/>
<dbReference type="UniPathway" id="UPA00213"/>
<dbReference type="GO" id="GO:0080043">
    <property type="term" value="F:quercetin 3-O-glucosyltransferase activity"/>
    <property type="evidence" value="ECO:0007669"/>
    <property type="project" value="TreeGrafter"/>
</dbReference>
<dbReference type="GO" id="GO:0080044">
    <property type="term" value="F:quercetin 7-O-glucosyltransferase activity"/>
    <property type="evidence" value="ECO:0007669"/>
    <property type="project" value="TreeGrafter"/>
</dbReference>
<dbReference type="CDD" id="cd03784">
    <property type="entry name" value="GT1_Gtf-like"/>
    <property type="match status" value="1"/>
</dbReference>
<dbReference type="FunFam" id="3.40.50.2000:FF:000060">
    <property type="entry name" value="Glycosyltransferase"/>
    <property type="match status" value="1"/>
</dbReference>
<dbReference type="Gene3D" id="3.40.50.2000">
    <property type="entry name" value="Glycogen Phosphorylase B"/>
    <property type="match status" value="2"/>
</dbReference>
<dbReference type="InterPro" id="IPR002213">
    <property type="entry name" value="UDP_glucos_trans"/>
</dbReference>
<dbReference type="InterPro" id="IPR035595">
    <property type="entry name" value="UDP_glycos_trans_CS"/>
</dbReference>
<dbReference type="PANTHER" id="PTHR11926">
    <property type="entry name" value="GLUCOSYL/GLUCURONOSYL TRANSFERASES"/>
    <property type="match status" value="1"/>
</dbReference>
<dbReference type="PANTHER" id="PTHR11926:SF1392">
    <property type="entry name" value="GLYCOSYLTRANSFERASE"/>
    <property type="match status" value="1"/>
</dbReference>
<dbReference type="Pfam" id="PF00201">
    <property type="entry name" value="UDPGT"/>
    <property type="match status" value="1"/>
</dbReference>
<dbReference type="SUPFAM" id="SSF53756">
    <property type="entry name" value="UDP-Glycosyltransferase/glycogen phosphorylase"/>
    <property type="match status" value="1"/>
</dbReference>
<feature type="chain" id="PRO_0000460918" description="Mogroside I-A1 synthase">
    <location>
        <begin position="1"/>
        <end position="523"/>
    </location>
</feature>
<feature type="active site" description="Proton acceptor" evidence="1">
    <location>
        <position position="39"/>
    </location>
</feature>
<feature type="active site" description="Charge relay" evidence="1">
    <location>
        <position position="136"/>
    </location>
</feature>
<feature type="binding site" evidence="2">
    <location>
        <position position="311"/>
    </location>
    <ligand>
        <name>UDP-alpha-D-glucose</name>
        <dbReference type="ChEBI" id="CHEBI:58885"/>
    </ligand>
</feature>
<feature type="binding site" evidence="2">
    <location>
        <position position="374"/>
    </location>
    <ligand>
        <name>UDP-alpha-D-glucose</name>
        <dbReference type="ChEBI" id="CHEBI:58885"/>
    </ligand>
</feature>
<feature type="binding site" evidence="2">
    <location>
        <position position="392"/>
    </location>
    <ligand>
        <name>UDP-alpha-D-glucose</name>
        <dbReference type="ChEBI" id="CHEBI:58885"/>
    </ligand>
</feature>
<feature type="binding site" evidence="2">
    <location>
        <position position="393"/>
    </location>
    <ligand>
        <name>UDP-alpha-D-glucose</name>
        <dbReference type="ChEBI" id="CHEBI:58885"/>
    </ligand>
</feature>
<feature type="binding site" evidence="2">
    <location>
        <position position="394"/>
    </location>
    <ligand>
        <name>UDP-alpha-D-glucose</name>
        <dbReference type="ChEBI" id="CHEBI:58885"/>
    </ligand>
</feature>
<feature type="binding site" evidence="2">
    <location>
        <position position="397"/>
    </location>
    <ligand>
        <name>UDP-alpha-D-glucose</name>
        <dbReference type="ChEBI" id="CHEBI:58885"/>
    </ligand>
</feature>
<feature type="binding site" evidence="2">
    <location>
        <position position="413"/>
    </location>
    <ligand>
        <name>UDP-alpha-D-glucose</name>
        <dbReference type="ChEBI" id="CHEBI:58885"/>
    </ligand>
</feature>
<feature type="binding site" evidence="2">
    <location>
        <position position="414"/>
    </location>
    <ligand>
        <name>UDP-alpha-D-glucose</name>
        <dbReference type="ChEBI" id="CHEBI:58885"/>
    </ligand>
</feature>
<name>GT721_SIRGR</name>
<gene>
    <name evidence="5" type="primary">UGT720-269-1</name>
</gene>
<comment type="function">
    <text evidence="3">UDP-glycosyltransferase involved in the biosynthesis of cucurbitacin and mogroside tetracyclic triterpene natural products (e.g. siamenoside I and mogrosides IV, V and VI) (PubMed:27821754). Cucurbitacins have cytotoxic properties and exhibit deterrent taste as a defense barrier against herbivores (PubMed:27821754). Mogrosides are nonsugar highly oxygenated compounds used as high-intensity zero-calorie sweeteners; they also possess pharmacological properties such as regulating immunity, lowering blood sugar and lipid levels, protecting the liver, and acting as antioxidants and antitumor agents (PubMed:27821754). Catalyzes the C24 primary glucosylation of mogrol and mogroside I-E1, and the C3 primary glucosylation of mogroside I-A1, mogroside II-A1 and mogroside II-A (PubMed:27821754). Also supports branching glucosylations of mogroside II-E, mogroside III, mogroside IIIx and siamenoside I (PubMed:27821754).</text>
</comment>
<comment type="catalytic activity">
    <reaction evidence="3">
        <text>mogrol + UDP-alpha-D-glucose = mogroside I-A1 + UDP + H(+)</text>
        <dbReference type="Rhea" id="RHEA:80179"/>
        <dbReference type="ChEBI" id="CHEBI:15378"/>
        <dbReference type="ChEBI" id="CHEBI:58223"/>
        <dbReference type="ChEBI" id="CHEBI:58885"/>
        <dbReference type="ChEBI" id="CHEBI:138974"/>
        <dbReference type="ChEBI" id="CHEBI:229951"/>
    </reaction>
    <physiologicalReaction direction="left-to-right" evidence="3">
        <dbReference type="Rhea" id="RHEA:80180"/>
    </physiologicalReaction>
</comment>
<comment type="catalytic activity">
    <reaction evidence="3">
        <text>mogroside I-A1 + UDP-alpha-D-glucose = mogroside IIE + UDP + H(+)</text>
        <dbReference type="Rhea" id="RHEA:80183"/>
        <dbReference type="ChEBI" id="CHEBI:15378"/>
        <dbReference type="ChEBI" id="CHEBI:58223"/>
        <dbReference type="ChEBI" id="CHEBI:58885"/>
        <dbReference type="ChEBI" id="CHEBI:145198"/>
        <dbReference type="ChEBI" id="CHEBI:229951"/>
    </reaction>
    <physiologicalReaction direction="left-to-right" evidence="3">
        <dbReference type="Rhea" id="RHEA:80184"/>
    </physiologicalReaction>
</comment>
<comment type="catalytic activity">
    <reaction evidence="3">
        <text>mogroside IE + UDP-alpha-D-glucose = mogroside IIE + UDP + H(+)</text>
        <dbReference type="Rhea" id="RHEA:81887"/>
        <dbReference type="ChEBI" id="CHEBI:15378"/>
        <dbReference type="ChEBI" id="CHEBI:58223"/>
        <dbReference type="ChEBI" id="CHEBI:58885"/>
        <dbReference type="ChEBI" id="CHEBI:138975"/>
        <dbReference type="ChEBI" id="CHEBI:145198"/>
    </reaction>
    <physiologicalReaction direction="left-to-right" evidence="3">
        <dbReference type="Rhea" id="RHEA:81888"/>
    </physiologicalReaction>
</comment>
<comment type="catalytic activity">
    <reaction evidence="3">
        <text>mogroside II-A1 + UDP-alpha-D-glucose = mogroside IIIX + UDP + H(+)</text>
        <dbReference type="Rhea" id="RHEA:81895"/>
        <dbReference type="ChEBI" id="CHEBI:15378"/>
        <dbReference type="ChEBI" id="CHEBI:58223"/>
        <dbReference type="ChEBI" id="CHEBI:58885"/>
        <dbReference type="ChEBI" id="CHEBI:229952"/>
        <dbReference type="ChEBI" id="CHEBI:232043"/>
    </reaction>
    <physiologicalReaction direction="left-to-right" evidence="3">
        <dbReference type="Rhea" id="RHEA:81896"/>
    </physiologicalReaction>
</comment>
<comment type="catalytic activity">
    <reaction evidence="3">
        <text>mogroside II-A + UDP-alpha-D-glucose = mogroside III + UDP + H(+)</text>
        <dbReference type="Rhea" id="RHEA:81899"/>
        <dbReference type="ChEBI" id="CHEBI:15378"/>
        <dbReference type="ChEBI" id="CHEBI:58223"/>
        <dbReference type="ChEBI" id="CHEBI:58885"/>
        <dbReference type="ChEBI" id="CHEBI:229960"/>
        <dbReference type="ChEBI" id="CHEBI:232044"/>
    </reaction>
    <physiologicalReaction direction="left-to-right" evidence="3">
        <dbReference type="Rhea" id="RHEA:81900"/>
    </physiologicalReaction>
</comment>
<comment type="catalytic activity">
    <reaction evidence="3">
        <text>mogroside IIE + UDP-alpha-D-glucose = mogroside III-C3(1-&gt;6) + UDP + H(+)</text>
        <dbReference type="Rhea" id="RHEA:81915"/>
        <dbReference type="ChEBI" id="CHEBI:15378"/>
        <dbReference type="ChEBI" id="CHEBI:58223"/>
        <dbReference type="ChEBI" id="CHEBI:58885"/>
        <dbReference type="ChEBI" id="CHEBI:145198"/>
        <dbReference type="ChEBI" id="CHEBI:229961"/>
    </reaction>
    <physiologicalReaction direction="left-to-right" evidence="3">
        <dbReference type="Rhea" id="RHEA:81916"/>
    </physiologicalReaction>
</comment>
<comment type="catalytic activity">
    <reaction evidence="3">
        <text>mogroside III + UDP-alpha-D-glucose = isomogroside IV + UDP + H(+)</text>
        <dbReference type="Rhea" id="RHEA:81919"/>
        <dbReference type="ChEBI" id="CHEBI:15378"/>
        <dbReference type="ChEBI" id="CHEBI:58223"/>
        <dbReference type="ChEBI" id="CHEBI:58885"/>
        <dbReference type="ChEBI" id="CHEBI:230512"/>
        <dbReference type="ChEBI" id="CHEBI:232044"/>
    </reaction>
    <physiologicalReaction direction="left-to-right" evidence="3">
        <dbReference type="Rhea" id="RHEA:81920"/>
    </physiologicalReaction>
</comment>
<comment type="catalytic activity">
    <reaction evidence="3">
        <text>mogroside III + UDP-alpha-D-glucose = mogroside IV + UDP + H(+)</text>
        <dbReference type="Rhea" id="RHEA:81923"/>
        <dbReference type="ChEBI" id="CHEBI:15378"/>
        <dbReference type="ChEBI" id="CHEBI:58223"/>
        <dbReference type="ChEBI" id="CHEBI:58885"/>
        <dbReference type="ChEBI" id="CHEBI:230514"/>
        <dbReference type="ChEBI" id="CHEBI:232044"/>
    </reaction>
    <physiologicalReaction direction="left-to-right" evidence="3">
        <dbReference type="Rhea" id="RHEA:81924"/>
    </physiologicalReaction>
</comment>
<comment type="catalytic activity">
    <reaction evidence="3">
        <text>mogroside IIIX + UDP-alpha-D-glucose = mogroside IVA + UDP + H(+)</text>
        <dbReference type="Rhea" id="RHEA:81863"/>
        <dbReference type="ChEBI" id="CHEBI:15378"/>
        <dbReference type="ChEBI" id="CHEBI:58223"/>
        <dbReference type="ChEBI" id="CHEBI:58885"/>
        <dbReference type="ChEBI" id="CHEBI:229952"/>
        <dbReference type="ChEBI" id="CHEBI:229958"/>
    </reaction>
    <physiologicalReaction direction="left-to-right" evidence="3">
        <dbReference type="Rhea" id="RHEA:81864"/>
    </physiologicalReaction>
</comment>
<comment type="catalytic activity">
    <reaction evidence="3">
        <text>siamenoside I + UDP-alpha-D-glucose = isomogroside V + UDP + H(+)</text>
        <dbReference type="Rhea" id="RHEA:81939"/>
        <dbReference type="ChEBI" id="CHEBI:15378"/>
        <dbReference type="ChEBI" id="CHEBI:58223"/>
        <dbReference type="ChEBI" id="CHEBI:58885"/>
        <dbReference type="ChEBI" id="CHEBI:228908"/>
        <dbReference type="ChEBI" id="CHEBI:230513"/>
    </reaction>
    <physiologicalReaction direction="left-to-right" evidence="3">
        <dbReference type="Rhea" id="RHEA:81940"/>
    </physiologicalReaction>
</comment>
<comment type="pathway">
    <text evidence="3">Secondary metabolite biosynthesis; terpenoid biosynthesis.</text>
</comment>
<comment type="tissue specificity">
    <text evidence="3">Highly expressed in young fruits 15 and 34 days after anthesis (15-DAA and 34-DAA).</text>
</comment>
<comment type="biotechnology">
    <text evidence="4">C.sativus and L.esculentum expressing S.grosvenorii genes SgSQE1, SgCS, SgEPH2, SgP450, SgUGT269-1 and SgUGT289-3 accumulate siamenoside I and mogrosides III and V, thus providing a strategy for vegetable flavor improvement or for heterologous biosynthesis of mogrosides.</text>
</comment>
<comment type="miscellaneous">
    <text evidence="8">Mogrosides, the major active constituents of S.grosvenorii fruits, are a mixture of cucurbitane-type triterpenoid glycosides that have been proven to be powerful and zero-caloric sweeteners and can hence be used as a sucrose substitute for diabetic and obese patients.</text>
</comment>
<comment type="similarity">
    <text evidence="7">Belongs to the UDP-glycosyltransferase family.</text>
</comment>
<accession>P0DO66</accession>
<sequence length="523" mass="58360">MEDRNAMDMSRIKYRPQPLRPASMVQPRVLLFPFPALGHVKPFLSLAELLSDAGIDVVFLSTEYNHRRISNTEALASRFPTLHFETIPDGLPPNESRALADGPLYFSMREGTKPRFRQLIQSLNDGRWPITCIITDIMLSSPIEVAEEFGIPVIAFCPCSARYLSIHFFIPKLVEEGQIPYADDDPIGEIQGVPLFEGLLRRNHLPGSWSDKSADISFSHGLINQTLAAGRASALILNTFDELEAPFLTHLSSIFNKIYTIGPLHALSKSRLGDSSSSASALSGFWKEDRACMSWLDCQPPRSVVFVSFGSTMKMKADELREFWYGLVSSGKPFLCVLRSDVVSGGEAAELIEQMAEEEGAGGKLGMVVEWAAQEKVLSHPAVGGFLTHCGWNSTVESIAAGVPMMCWPILGDQPSNATWIDRVWKIGVERNNREWDRLTVEKMVRALMEGQKRVEIQRSMEKLSKLANEKVVRGINLHPTISLKKDTPTTSEHPRHEFENMRGMNYEMLVGNAIKSPTLTKK</sequence>
<reference key="1">
    <citation type="journal article" date="2016" name="Proc. Natl. Acad. Sci. U.S.A.">
        <title>The biosynthetic pathway of the nonsugar, high-intensity sweetener mogroside V from Siraitia grosvenorii.</title>
        <authorList>
            <person name="Itkin M."/>
            <person name="Davidovich-Rikanati R."/>
            <person name="Cohen S."/>
            <person name="Portnoy V."/>
            <person name="Doron-Faigenboim A."/>
            <person name="Oren E."/>
            <person name="Freilich S."/>
            <person name="Tzuri G."/>
            <person name="Baranes N."/>
            <person name="Shen S."/>
            <person name="Petreikov M."/>
            <person name="Sertchook R."/>
            <person name="Ben-Dor S."/>
            <person name="Gottlieb H."/>
            <person name="Hernandez A."/>
            <person name="Nelson D.R."/>
            <person name="Paris H.S."/>
            <person name="Tadmor Y."/>
            <person name="Burger Y."/>
            <person name="Lewinsohn E."/>
            <person name="Katzir N."/>
            <person name="Schaffer A."/>
        </authorList>
    </citation>
    <scope>NUCLEOTIDE SEQUENCE</scope>
    <scope>FUNCTION</scope>
    <scope>CATALYTIC ACTIVITY</scope>
    <scope>PATHWAY</scope>
    <scope>TISSUE SPECIFICITY</scope>
    <scope>GENE FAMILY</scope>
    <scope>NOMENCLATURE</scope>
</reference>
<reference key="2">
    <citation type="journal article" date="2023" name="Commun. Biol.">
        <title>Heterologous mogrosides biosynthesis in cucumber and tomato by genetic manipulation.</title>
        <authorList>
            <person name="Liao J."/>
            <person name="Liu T."/>
            <person name="Xie L."/>
            <person name="Mo C."/>
            <person name="Qiao J."/>
            <person name="Huang X."/>
            <person name="Cui S."/>
            <person name="Jia X."/>
            <person name="Luo Z."/>
            <person name="Ma X."/>
        </authorList>
    </citation>
    <scope>BIOTECHNOLOGY</scope>
</reference>